<reference key="1">
    <citation type="journal article" date="2007" name="Science">
        <title>Legumes symbioses: absence of nod genes in photosynthetic bradyrhizobia.</title>
        <authorList>
            <person name="Giraud E."/>
            <person name="Moulin L."/>
            <person name="Vallenet D."/>
            <person name="Barbe V."/>
            <person name="Cytryn E."/>
            <person name="Avarre J.-C."/>
            <person name="Jaubert M."/>
            <person name="Simon D."/>
            <person name="Cartieaux F."/>
            <person name="Prin Y."/>
            <person name="Bena G."/>
            <person name="Hannibal L."/>
            <person name="Fardoux J."/>
            <person name="Kojadinovic M."/>
            <person name="Vuillet L."/>
            <person name="Lajus A."/>
            <person name="Cruveiller S."/>
            <person name="Rouy Z."/>
            <person name="Mangenot S."/>
            <person name="Segurens B."/>
            <person name="Dossat C."/>
            <person name="Franck W.L."/>
            <person name="Chang W.-S."/>
            <person name="Saunders E."/>
            <person name="Bruce D."/>
            <person name="Richardson P."/>
            <person name="Normand P."/>
            <person name="Dreyfus B."/>
            <person name="Pignol D."/>
            <person name="Stacey G."/>
            <person name="Emerich D."/>
            <person name="Vermeglio A."/>
            <person name="Medigue C."/>
            <person name="Sadowsky M."/>
        </authorList>
    </citation>
    <scope>NUCLEOTIDE SEQUENCE [LARGE SCALE GENOMIC DNA]</scope>
    <source>
        <strain>BTAi1 / ATCC BAA-1182</strain>
    </source>
</reference>
<accession>A5EK49</accession>
<evidence type="ECO:0000255" key="1">
    <source>
        <dbReference type="HAMAP-Rule" id="MF_00183"/>
    </source>
</evidence>
<name>DXR_BRASB</name>
<organism>
    <name type="scientific">Bradyrhizobium sp. (strain BTAi1 / ATCC BAA-1182)</name>
    <dbReference type="NCBI Taxonomy" id="288000"/>
    <lineage>
        <taxon>Bacteria</taxon>
        <taxon>Pseudomonadati</taxon>
        <taxon>Pseudomonadota</taxon>
        <taxon>Alphaproteobacteria</taxon>
        <taxon>Hyphomicrobiales</taxon>
        <taxon>Nitrobacteraceae</taxon>
        <taxon>Bradyrhizobium</taxon>
    </lineage>
</organism>
<protein>
    <recommendedName>
        <fullName evidence="1">1-deoxy-D-xylulose 5-phosphate reductoisomerase</fullName>
        <shortName evidence="1">DXP reductoisomerase</shortName>
        <ecNumber evidence="1">1.1.1.267</ecNumber>
    </recommendedName>
    <alternativeName>
        <fullName evidence="1">1-deoxyxylulose-5-phosphate reductoisomerase</fullName>
    </alternativeName>
    <alternativeName>
        <fullName evidence="1">2-C-methyl-D-erythritol 4-phosphate synthase</fullName>
    </alternativeName>
</protein>
<gene>
    <name evidence="1" type="primary">dxr</name>
    <name type="ordered locus">BBta_4511</name>
</gene>
<comment type="function">
    <text evidence="1">Catalyzes the NADPH-dependent rearrangement and reduction of 1-deoxy-D-xylulose-5-phosphate (DXP) to 2-C-methyl-D-erythritol 4-phosphate (MEP).</text>
</comment>
<comment type="catalytic activity">
    <reaction evidence="1">
        <text>2-C-methyl-D-erythritol 4-phosphate + NADP(+) = 1-deoxy-D-xylulose 5-phosphate + NADPH + H(+)</text>
        <dbReference type="Rhea" id="RHEA:13717"/>
        <dbReference type="ChEBI" id="CHEBI:15378"/>
        <dbReference type="ChEBI" id="CHEBI:57783"/>
        <dbReference type="ChEBI" id="CHEBI:57792"/>
        <dbReference type="ChEBI" id="CHEBI:58262"/>
        <dbReference type="ChEBI" id="CHEBI:58349"/>
        <dbReference type="EC" id="1.1.1.267"/>
    </reaction>
    <physiologicalReaction direction="right-to-left" evidence="1">
        <dbReference type="Rhea" id="RHEA:13719"/>
    </physiologicalReaction>
</comment>
<comment type="cofactor">
    <cofactor evidence="1">
        <name>Mg(2+)</name>
        <dbReference type="ChEBI" id="CHEBI:18420"/>
    </cofactor>
    <cofactor evidence="1">
        <name>Mn(2+)</name>
        <dbReference type="ChEBI" id="CHEBI:29035"/>
    </cofactor>
</comment>
<comment type="pathway">
    <text evidence="1">Isoprenoid biosynthesis; isopentenyl diphosphate biosynthesis via DXP pathway; isopentenyl diphosphate from 1-deoxy-D-xylulose 5-phosphate: step 1/6.</text>
</comment>
<comment type="similarity">
    <text evidence="1">Belongs to the DXR family.</text>
</comment>
<proteinExistence type="inferred from homology"/>
<sequence length="407" mass="42610">MSAVPLRNNKPGRAEVRSITVLGATGSIGESTMDLLRGAPERYRVEALTGNSNVQGLAKLAREFKPGFVAVADPARLNELRDALAGTGIACGAGESAIIEAAARPADWVMAAVSGAAGLKPALAAVDRGATVALANKECLVCAGDFFMQRAAQAGACILPADSEHNALFQALSSGNREELVRVIITASGGPFRTWAAADIEQATLAQALKHPNWSMGQKITIDSASMMNKGLEVIEASYLFALSPDEIDVLVHPQSIVHGMVEFSDRSVVAQLGAPDMRIPIAHCLGWPDRIAGPSARLDLAKIGTLTFEAPDFVRFPGLRLAYDSLRTGRGATTVYNAANEVAVAAFAAGQIRFGAIARLVEATLEHWTRSGNQAPLTSADDAIAIDHDARKTAAGLLPQIAAKAS</sequence>
<keyword id="KW-0414">Isoprene biosynthesis</keyword>
<keyword id="KW-0464">Manganese</keyword>
<keyword id="KW-0479">Metal-binding</keyword>
<keyword id="KW-0521">NADP</keyword>
<keyword id="KW-0560">Oxidoreductase</keyword>
<keyword id="KW-1185">Reference proteome</keyword>
<dbReference type="EC" id="1.1.1.267" evidence="1"/>
<dbReference type="EMBL" id="CP000494">
    <property type="protein sequence ID" value="ABQ36543.1"/>
    <property type="molecule type" value="Genomic_DNA"/>
</dbReference>
<dbReference type="RefSeq" id="WP_012044539.1">
    <property type="nucleotide sequence ID" value="NC_009485.1"/>
</dbReference>
<dbReference type="SMR" id="A5EK49"/>
<dbReference type="STRING" id="288000.BBta_4511"/>
<dbReference type="KEGG" id="bbt:BBta_4511"/>
<dbReference type="eggNOG" id="COG0743">
    <property type="taxonomic scope" value="Bacteria"/>
</dbReference>
<dbReference type="HOGENOM" id="CLU_035714_4_0_5"/>
<dbReference type="OrthoDB" id="9806546at2"/>
<dbReference type="UniPathway" id="UPA00056">
    <property type="reaction ID" value="UER00092"/>
</dbReference>
<dbReference type="Proteomes" id="UP000000246">
    <property type="component" value="Chromosome"/>
</dbReference>
<dbReference type="GO" id="GO:0030604">
    <property type="term" value="F:1-deoxy-D-xylulose-5-phosphate reductoisomerase activity"/>
    <property type="evidence" value="ECO:0007669"/>
    <property type="project" value="UniProtKB-UniRule"/>
</dbReference>
<dbReference type="GO" id="GO:0030145">
    <property type="term" value="F:manganese ion binding"/>
    <property type="evidence" value="ECO:0007669"/>
    <property type="project" value="TreeGrafter"/>
</dbReference>
<dbReference type="GO" id="GO:0070402">
    <property type="term" value="F:NADPH binding"/>
    <property type="evidence" value="ECO:0007669"/>
    <property type="project" value="InterPro"/>
</dbReference>
<dbReference type="GO" id="GO:0051484">
    <property type="term" value="P:isopentenyl diphosphate biosynthetic process, methylerythritol 4-phosphate pathway involved in terpenoid biosynthetic process"/>
    <property type="evidence" value="ECO:0007669"/>
    <property type="project" value="TreeGrafter"/>
</dbReference>
<dbReference type="FunFam" id="3.40.50.720:FF:000045">
    <property type="entry name" value="1-deoxy-D-xylulose 5-phosphate reductoisomerase"/>
    <property type="match status" value="1"/>
</dbReference>
<dbReference type="Gene3D" id="1.10.1740.10">
    <property type="match status" value="1"/>
</dbReference>
<dbReference type="Gene3D" id="3.40.50.720">
    <property type="entry name" value="NAD(P)-binding Rossmann-like Domain"/>
    <property type="match status" value="1"/>
</dbReference>
<dbReference type="HAMAP" id="MF_00183">
    <property type="entry name" value="DXP_reductoisom"/>
    <property type="match status" value="1"/>
</dbReference>
<dbReference type="InterPro" id="IPR003821">
    <property type="entry name" value="DXP_reductoisomerase"/>
</dbReference>
<dbReference type="InterPro" id="IPR013644">
    <property type="entry name" value="DXP_reductoisomerase_C"/>
</dbReference>
<dbReference type="InterPro" id="IPR013512">
    <property type="entry name" value="DXP_reductoisomerase_N"/>
</dbReference>
<dbReference type="InterPro" id="IPR026877">
    <property type="entry name" value="DXPR_C"/>
</dbReference>
<dbReference type="InterPro" id="IPR036169">
    <property type="entry name" value="DXPR_C_sf"/>
</dbReference>
<dbReference type="InterPro" id="IPR036291">
    <property type="entry name" value="NAD(P)-bd_dom_sf"/>
</dbReference>
<dbReference type="NCBIfam" id="TIGR00243">
    <property type="entry name" value="Dxr"/>
    <property type="match status" value="1"/>
</dbReference>
<dbReference type="PANTHER" id="PTHR30525">
    <property type="entry name" value="1-DEOXY-D-XYLULOSE 5-PHOSPHATE REDUCTOISOMERASE"/>
    <property type="match status" value="1"/>
</dbReference>
<dbReference type="PANTHER" id="PTHR30525:SF0">
    <property type="entry name" value="1-DEOXY-D-XYLULOSE 5-PHOSPHATE REDUCTOISOMERASE, CHLOROPLASTIC"/>
    <property type="match status" value="1"/>
</dbReference>
<dbReference type="Pfam" id="PF08436">
    <property type="entry name" value="DXP_redisom_C"/>
    <property type="match status" value="1"/>
</dbReference>
<dbReference type="Pfam" id="PF02670">
    <property type="entry name" value="DXP_reductoisom"/>
    <property type="match status" value="1"/>
</dbReference>
<dbReference type="Pfam" id="PF13288">
    <property type="entry name" value="DXPR_C"/>
    <property type="match status" value="1"/>
</dbReference>
<dbReference type="PIRSF" id="PIRSF006205">
    <property type="entry name" value="Dxp_reductismrs"/>
    <property type="match status" value="1"/>
</dbReference>
<dbReference type="SUPFAM" id="SSF69055">
    <property type="entry name" value="1-deoxy-D-xylulose-5-phosphate reductoisomerase, C-terminal domain"/>
    <property type="match status" value="1"/>
</dbReference>
<dbReference type="SUPFAM" id="SSF55347">
    <property type="entry name" value="Glyceraldehyde-3-phosphate dehydrogenase-like, C-terminal domain"/>
    <property type="match status" value="1"/>
</dbReference>
<dbReference type="SUPFAM" id="SSF51735">
    <property type="entry name" value="NAD(P)-binding Rossmann-fold domains"/>
    <property type="match status" value="1"/>
</dbReference>
<feature type="chain" id="PRO_1000020221" description="1-deoxy-D-xylulose 5-phosphate reductoisomerase">
    <location>
        <begin position="1"/>
        <end position="407"/>
    </location>
</feature>
<feature type="binding site" evidence="1">
    <location>
        <position position="25"/>
    </location>
    <ligand>
        <name>NADPH</name>
        <dbReference type="ChEBI" id="CHEBI:57783"/>
    </ligand>
</feature>
<feature type="binding site" evidence="1">
    <location>
        <position position="26"/>
    </location>
    <ligand>
        <name>NADPH</name>
        <dbReference type="ChEBI" id="CHEBI:57783"/>
    </ligand>
</feature>
<feature type="binding site" evidence="1">
    <location>
        <position position="27"/>
    </location>
    <ligand>
        <name>NADPH</name>
        <dbReference type="ChEBI" id="CHEBI:57783"/>
    </ligand>
</feature>
<feature type="binding site" evidence="1">
    <location>
        <position position="28"/>
    </location>
    <ligand>
        <name>NADPH</name>
        <dbReference type="ChEBI" id="CHEBI:57783"/>
    </ligand>
</feature>
<feature type="binding site" evidence="1">
    <location>
        <position position="53"/>
    </location>
    <ligand>
        <name>NADPH</name>
        <dbReference type="ChEBI" id="CHEBI:57783"/>
    </ligand>
</feature>
<feature type="binding site" evidence="1">
    <location>
        <position position="136"/>
    </location>
    <ligand>
        <name>NADPH</name>
        <dbReference type="ChEBI" id="CHEBI:57783"/>
    </ligand>
</feature>
<feature type="binding site" evidence="1">
    <location>
        <position position="137"/>
    </location>
    <ligand>
        <name>1-deoxy-D-xylulose 5-phosphate</name>
        <dbReference type="ChEBI" id="CHEBI:57792"/>
    </ligand>
</feature>
<feature type="binding site" evidence="1">
    <location>
        <position position="138"/>
    </location>
    <ligand>
        <name>NADPH</name>
        <dbReference type="ChEBI" id="CHEBI:57783"/>
    </ligand>
</feature>
<feature type="binding site" evidence="1">
    <location>
        <position position="162"/>
    </location>
    <ligand>
        <name>Mn(2+)</name>
        <dbReference type="ChEBI" id="CHEBI:29035"/>
    </ligand>
</feature>
<feature type="binding site" evidence="1">
    <location>
        <position position="163"/>
    </location>
    <ligand>
        <name>1-deoxy-D-xylulose 5-phosphate</name>
        <dbReference type="ChEBI" id="CHEBI:57792"/>
    </ligand>
</feature>
<feature type="binding site" evidence="1">
    <location>
        <position position="164"/>
    </location>
    <ligand>
        <name>1-deoxy-D-xylulose 5-phosphate</name>
        <dbReference type="ChEBI" id="CHEBI:57792"/>
    </ligand>
</feature>
<feature type="binding site" evidence="1">
    <location>
        <position position="164"/>
    </location>
    <ligand>
        <name>Mn(2+)</name>
        <dbReference type="ChEBI" id="CHEBI:29035"/>
    </ligand>
</feature>
<feature type="binding site" evidence="1">
    <location>
        <position position="188"/>
    </location>
    <ligand>
        <name>1-deoxy-D-xylulose 5-phosphate</name>
        <dbReference type="ChEBI" id="CHEBI:57792"/>
    </ligand>
</feature>
<feature type="binding site" evidence="1">
    <location>
        <position position="211"/>
    </location>
    <ligand>
        <name>1-deoxy-D-xylulose 5-phosphate</name>
        <dbReference type="ChEBI" id="CHEBI:57792"/>
    </ligand>
</feature>
<feature type="binding site" evidence="1">
    <location>
        <position position="217"/>
    </location>
    <ligand>
        <name>NADPH</name>
        <dbReference type="ChEBI" id="CHEBI:57783"/>
    </ligand>
</feature>
<feature type="binding site" evidence="1">
    <location>
        <position position="224"/>
    </location>
    <ligand>
        <name>1-deoxy-D-xylulose 5-phosphate</name>
        <dbReference type="ChEBI" id="CHEBI:57792"/>
    </ligand>
</feature>
<feature type="binding site" evidence="1">
    <location>
        <position position="229"/>
    </location>
    <ligand>
        <name>1-deoxy-D-xylulose 5-phosphate</name>
        <dbReference type="ChEBI" id="CHEBI:57792"/>
    </ligand>
</feature>
<feature type="binding site" evidence="1">
    <location>
        <position position="230"/>
    </location>
    <ligand>
        <name>1-deoxy-D-xylulose 5-phosphate</name>
        <dbReference type="ChEBI" id="CHEBI:57792"/>
    </ligand>
</feature>
<feature type="binding site" evidence="1">
    <location>
        <position position="233"/>
    </location>
    <ligand>
        <name>1-deoxy-D-xylulose 5-phosphate</name>
        <dbReference type="ChEBI" id="CHEBI:57792"/>
    </ligand>
</feature>
<feature type="binding site" evidence="1">
    <location>
        <position position="233"/>
    </location>
    <ligand>
        <name>Mn(2+)</name>
        <dbReference type="ChEBI" id="CHEBI:29035"/>
    </ligand>
</feature>